<evidence type="ECO:0000255" key="1">
    <source>
        <dbReference type="HAMAP-Rule" id="MF_03043"/>
    </source>
</evidence>
<proteinExistence type="inferred from homology"/>
<reference key="1">
    <citation type="journal article" date="1998" name="Science">
        <title>Genome sequence of the nematode C. elegans: a platform for investigating biology.</title>
        <authorList>
            <consortium name="The C. elegans sequencing consortium"/>
        </authorList>
    </citation>
    <scope>NUCLEOTIDE SEQUENCE [LARGE SCALE GENOMIC DNA]</scope>
    <source>
        <strain>Bristol N2</strain>
    </source>
</reference>
<feature type="chain" id="PRO_0000383929" description="Queuine tRNA-ribosyltransferase accessory subunit 2">
    <location>
        <begin position="1"/>
        <end position="373"/>
    </location>
</feature>
<feature type="binding site" evidence="1">
    <location>
        <position position="320"/>
    </location>
    <ligand>
        <name>Zn(2+)</name>
        <dbReference type="ChEBI" id="CHEBI:29105"/>
    </ligand>
</feature>
<feature type="binding site" evidence="1">
    <location>
        <position position="322"/>
    </location>
    <ligand>
        <name>Zn(2+)</name>
        <dbReference type="ChEBI" id="CHEBI:29105"/>
    </ligand>
</feature>
<feature type="binding site" evidence="1">
    <location>
        <position position="325"/>
    </location>
    <ligand>
        <name>Zn(2+)</name>
        <dbReference type="ChEBI" id="CHEBI:29105"/>
    </ligand>
</feature>
<feature type="binding site" evidence="1">
    <location>
        <position position="351"/>
    </location>
    <ligand>
        <name>Zn(2+)</name>
        <dbReference type="ChEBI" id="CHEBI:29105"/>
    </ligand>
</feature>
<sequence length="373" mass="41913">MVKFQIEKKTLLGRLGKIDTWGSVEVNHQTPSFQTYLRAGHIPHLTWEVAENQLKLEQTHIFQMTLPTLVSNAKIIEKFGKGAAKFCGMPAGAAVHLTPFDPLGKLPGGYNDSKSVAIWTANGKVSLDVKMWREIINSFGCGSIETLVDYDTPKDVGQKKLVKAVDRTKTFQEQLFQQDEKVNGERIVSLGGGFSKYHRRKCAVDVGLAENIAGYTVEFREFTEGKETDDKEMKELLEETFSPLPPTKLRCISGPFNPKTVLFLVQQGIDLFDSSFPVKLAEEGHAFCLSDDFPTSSKYEVVDFNNEKFADDFTALFDGCACYTCTKYTKGYLQHLLNTRELLASILLVIHNMTEYDKMFKLIRSSLENSEGL</sequence>
<protein>
    <recommendedName>
        <fullName evidence="1">Queuine tRNA-ribosyltransferase accessory subunit 2</fullName>
    </recommendedName>
    <alternativeName>
        <fullName evidence="1">Queuine tRNA-ribosyltransferase domain-containing protein 1</fullName>
    </alternativeName>
</protein>
<comment type="function">
    <text evidence="1">Non-catalytic subunit of the queuine tRNA-ribosyltransferase (TGT) that catalyzes the base-exchange of a guanine (G) residue with queuine (Q) at position 34 (anticodon wobble position) in tRNAs with GU(N) anticodons (tRNA-Asp, -Asn, -His and -Tyr), resulting in the hypermodified nucleoside queuosine (7-(((4,5-cis-dihydroxy-2-cyclopenten-1-yl)amino)methyl)-7-deazaguanosine).</text>
</comment>
<comment type="cofactor">
    <cofactor evidence="1">
        <name>Zn(2+)</name>
        <dbReference type="ChEBI" id="CHEBI:29105"/>
    </cofactor>
    <text evidence="1">Binds 1 zinc ion per subunit.</text>
</comment>
<comment type="subunit">
    <text evidence="1">Heterodimer of a catalytic subunit and an accessory subunit.</text>
</comment>
<comment type="subcellular location">
    <subcellularLocation>
        <location evidence="1">Cytoplasm</location>
    </subcellularLocation>
</comment>
<comment type="similarity">
    <text evidence="1">Belongs to the queuine tRNA-ribosyltransferase family. QTRT2 subfamily.</text>
</comment>
<dbReference type="EMBL" id="AL132948">
    <property type="protein sequence ID" value="CAC51046.1"/>
    <property type="molecule type" value="Genomic_DNA"/>
</dbReference>
<dbReference type="PIR" id="T45043">
    <property type="entry name" value="T45043"/>
</dbReference>
<dbReference type="RefSeq" id="NP_741662.1">
    <property type="nucleotide sequence ID" value="NM_171572.4"/>
</dbReference>
<dbReference type="SMR" id="Q9NEU3"/>
<dbReference type="BioGRID" id="45206">
    <property type="interactions" value="1"/>
</dbReference>
<dbReference type="FunCoup" id="Q9NEU3">
    <property type="interactions" value="2528"/>
</dbReference>
<dbReference type="STRING" id="6239.Y39B6A.35.1"/>
<dbReference type="PaxDb" id="6239-Y39B6A.35"/>
<dbReference type="PeptideAtlas" id="Q9NEU3"/>
<dbReference type="EnsemblMetazoa" id="Y39B6A.35.1">
    <property type="protein sequence ID" value="Y39B6A.35.1"/>
    <property type="gene ID" value="WBGene00006567"/>
</dbReference>
<dbReference type="GeneID" id="180244"/>
<dbReference type="KEGG" id="cel:CELE_Y39B6A.35"/>
<dbReference type="UCSC" id="Y39B6A.35">
    <property type="organism name" value="c. elegans"/>
</dbReference>
<dbReference type="AGR" id="WB:WBGene00006567"/>
<dbReference type="CTD" id="180244"/>
<dbReference type="WormBase" id="Y39B6A.35">
    <property type="protein sequence ID" value="CE21692"/>
    <property type="gene ID" value="WBGene00006567"/>
    <property type="gene designation" value="tgt-2"/>
</dbReference>
<dbReference type="eggNOG" id="KOG3909">
    <property type="taxonomic scope" value="Eukaryota"/>
</dbReference>
<dbReference type="GeneTree" id="ENSGT00530000063679"/>
<dbReference type="HOGENOM" id="CLU_037350_0_0_1"/>
<dbReference type="InParanoid" id="Q9NEU3"/>
<dbReference type="OMA" id="VPHIAHD"/>
<dbReference type="OrthoDB" id="27601at2759"/>
<dbReference type="PhylomeDB" id="Q9NEU3"/>
<dbReference type="PRO" id="PR:Q9NEU3"/>
<dbReference type="Proteomes" id="UP000001940">
    <property type="component" value="Chromosome V"/>
</dbReference>
<dbReference type="Bgee" id="WBGene00006567">
    <property type="expression patterns" value="Expressed in germ line (C elegans) and 4 other cell types or tissues"/>
</dbReference>
<dbReference type="GO" id="GO:0005737">
    <property type="term" value="C:cytoplasm"/>
    <property type="evidence" value="ECO:0007669"/>
    <property type="project" value="UniProtKB-SubCell"/>
</dbReference>
<dbReference type="GO" id="GO:0046872">
    <property type="term" value="F:metal ion binding"/>
    <property type="evidence" value="ECO:0007669"/>
    <property type="project" value="UniProtKB-KW"/>
</dbReference>
<dbReference type="GO" id="GO:0008479">
    <property type="term" value="F:tRNA-guanosine(34) queuine transglycosylase activity"/>
    <property type="evidence" value="ECO:0007669"/>
    <property type="project" value="UniProtKB-UniRule"/>
</dbReference>
<dbReference type="GO" id="GO:0101030">
    <property type="term" value="P:tRNA-guanine transglycosylation"/>
    <property type="evidence" value="ECO:0000318"/>
    <property type="project" value="GO_Central"/>
</dbReference>
<dbReference type="FunFam" id="3.20.20.105:FF:000008">
    <property type="entry name" value="Queuine tRNA-ribosyltransferase accessory subunit 2"/>
    <property type="match status" value="1"/>
</dbReference>
<dbReference type="Gene3D" id="3.20.20.105">
    <property type="entry name" value="Queuine tRNA-ribosyltransferase-like"/>
    <property type="match status" value="1"/>
</dbReference>
<dbReference type="HAMAP" id="MF_03043">
    <property type="entry name" value="QTRT2"/>
    <property type="match status" value="1"/>
</dbReference>
<dbReference type="InterPro" id="IPR028592">
    <property type="entry name" value="QTRTD1"/>
</dbReference>
<dbReference type="InterPro" id="IPR050852">
    <property type="entry name" value="Queuine_tRNA-ribosyltrfase"/>
</dbReference>
<dbReference type="InterPro" id="IPR036511">
    <property type="entry name" value="TGT-like_sf"/>
</dbReference>
<dbReference type="InterPro" id="IPR002616">
    <property type="entry name" value="tRNA_ribo_trans-like"/>
</dbReference>
<dbReference type="NCBIfam" id="TIGR00449">
    <property type="entry name" value="tgt_general"/>
    <property type="match status" value="1"/>
</dbReference>
<dbReference type="PANTHER" id="PTHR46064">
    <property type="entry name" value="QUEUINE TRNA-RIBOSYLTRANSFERASE ACCESSORY SUBUNIT 2"/>
    <property type="match status" value="1"/>
</dbReference>
<dbReference type="PANTHER" id="PTHR46064:SF1">
    <property type="entry name" value="QUEUINE TRNA-RIBOSYLTRANSFERASE ACCESSORY SUBUNIT 2"/>
    <property type="match status" value="1"/>
</dbReference>
<dbReference type="Pfam" id="PF01702">
    <property type="entry name" value="TGT"/>
    <property type="match status" value="1"/>
</dbReference>
<dbReference type="SUPFAM" id="SSF51713">
    <property type="entry name" value="tRNA-guanine transglycosylase"/>
    <property type="match status" value="1"/>
</dbReference>
<keyword id="KW-0963">Cytoplasm</keyword>
<keyword id="KW-0479">Metal-binding</keyword>
<keyword id="KW-1185">Reference proteome</keyword>
<keyword id="KW-0819">tRNA processing</keyword>
<keyword id="KW-0862">Zinc</keyword>
<accession>Q9NEU3</accession>
<gene>
    <name evidence="1" type="primary">tgt-2</name>
    <name type="ORF">Y39B6A.35</name>
</gene>
<organism>
    <name type="scientific">Caenorhabditis elegans</name>
    <dbReference type="NCBI Taxonomy" id="6239"/>
    <lineage>
        <taxon>Eukaryota</taxon>
        <taxon>Metazoa</taxon>
        <taxon>Ecdysozoa</taxon>
        <taxon>Nematoda</taxon>
        <taxon>Chromadorea</taxon>
        <taxon>Rhabditida</taxon>
        <taxon>Rhabditina</taxon>
        <taxon>Rhabditomorpha</taxon>
        <taxon>Rhabditoidea</taxon>
        <taxon>Rhabditidae</taxon>
        <taxon>Peloderinae</taxon>
        <taxon>Caenorhabditis</taxon>
    </lineage>
</organism>
<name>QTRT2_CAEEL</name>